<sequence>MSSNKINKKSIARIAAVQAIYQNILQNNDDMDDIMQNVLSFYQNNNSITDLPENLKISLSISHFKMLVKLVFENIHKLDEIIDNHLTNDKDPAHMPILLRALLRVSICELLFCPTTPAKVVINEYTDIANDMLNEHEIGFVNSVLDKIAKEHTRLI</sequence>
<accession>A8GQY9</accession>
<proteinExistence type="inferred from homology"/>
<protein>
    <recommendedName>
        <fullName evidence="1">Transcription antitermination protein NusB</fullName>
    </recommendedName>
    <alternativeName>
        <fullName evidence="1">Antitermination factor NusB</fullName>
    </alternativeName>
</protein>
<reference key="1">
    <citation type="submission" date="2007-09" db="EMBL/GenBank/DDBJ databases">
        <title>Complete genome sequence of Rickettsia rickettsii.</title>
        <authorList>
            <person name="Madan A."/>
            <person name="Fahey J."/>
            <person name="Helton E."/>
            <person name="Ketteman M."/>
            <person name="Madan A."/>
            <person name="Rodrigues S."/>
            <person name="Sanchez A."/>
            <person name="Dasch G."/>
            <person name="Eremeeva M."/>
        </authorList>
    </citation>
    <scope>NUCLEOTIDE SEQUENCE [LARGE SCALE GENOMIC DNA]</scope>
    <source>
        <strain>Sheila Smith</strain>
    </source>
</reference>
<name>NUSB_RICRS</name>
<keyword id="KW-0694">RNA-binding</keyword>
<keyword id="KW-0804">Transcription</keyword>
<keyword id="KW-0889">Transcription antitermination</keyword>
<keyword id="KW-0805">Transcription regulation</keyword>
<dbReference type="EMBL" id="CP000848">
    <property type="protein sequence ID" value="ABV75814.1"/>
    <property type="molecule type" value="Genomic_DNA"/>
</dbReference>
<dbReference type="RefSeq" id="WP_012150420.1">
    <property type="nucleotide sequence ID" value="NZ_CP121767.1"/>
</dbReference>
<dbReference type="SMR" id="A8GQY9"/>
<dbReference type="GeneID" id="79936998"/>
<dbReference type="KEGG" id="rri:A1G_01160"/>
<dbReference type="HOGENOM" id="CLU_087843_4_3_5"/>
<dbReference type="Proteomes" id="UP000006832">
    <property type="component" value="Chromosome"/>
</dbReference>
<dbReference type="GO" id="GO:0005829">
    <property type="term" value="C:cytosol"/>
    <property type="evidence" value="ECO:0007669"/>
    <property type="project" value="TreeGrafter"/>
</dbReference>
<dbReference type="GO" id="GO:0003723">
    <property type="term" value="F:RNA binding"/>
    <property type="evidence" value="ECO:0007669"/>
    <property type="project" value="UniProtKB-UniRule"/>
</dbReference>
<dbReference type="GO" id="GO:0006353">
    <property type="term" value="P:DNA-templated transcription termination"/>
    <property type="evidence" value="ECO:0007669"/>
    <property type="project" value="UniProtKB-UniRule"/>
</dbReference>
<dbReference type="GO" id="GO:0031564">
    <property type="term" value="P:transcription antitermination"/>
    <property type="evidence" value="ECO:0007669"/>
    <property type="project" value="UniProtKB-KW"/>
</dbReference>
<dbReference type="Gene3D" id="1.10.940.10">
    <property type="entry name" value="NusB-like"/>
    <property type="match status" value="1"/>
</dbReference>
<dbReference type="HAMAP" id="MF_00073">
    <property type="entry name" value="NusB"/>
    <property type="match status" value="1"/>
</dbReference>
<dbReference type="InterPro" id="IPR035926">
    <property type="entry name" value="NusB-like_sf"/>
</dbReference>
<dbReference type="InterPro" id="IPR011605">
    <property type="entry name" value="NusB_fam"/>
</dbReference>
<dbReference type="InterPro" id="IPR006027">
    <property type="entry name" value="NusB_RsmB_TIM44"/>
</dbReference>
<dbReference type="NCBIfam" id="TIGR01951">
    <property type="entry name" value="nusB"/>
    <property type="match status" value="1"/>
</dbReference>
<dbReference type="PANTHER" id="PTHR11078:SF3">
    <property type="entry name" value="ANTITERMINATION NUSB DOMAIN-CONTAINING PROTEIN"/>
    <property type="match status" value="1"/>
</dbReference>
<dbReference type="PANTHER" id="PTHR11078">
    <property type="entry name" value="N UTILIZATION SUBSTANCE PROTEIN B-RELATED"/>
    <property type="match status" value="1"/>
</dbReference>
<dbReference type="Pfam" id="PF01029">
    <property type="entry name" value="NusB"/>
    <property type="match status" value="1"/>
</dbReference>
<dbReference type="SUPFAM" id="SSF48013">
    <property type="entry name" value="NusB-like"/>
    <property type="match status" value="1"/>
</dbReference>
<feature type="chain" id="PRO_1000023767" description="Transcription antitermination protein NusB">
    <location>
        <begin position="1"/>
        <end position="156"/>
    </location>
</feature>
<comment type="function">
    <text evidence="1">Involved in transcription antitermination. Required for transcription of ribosomal RNA (rRNA) genes. Binds specifically to the boxA antiterminator sequence of the ribosomal RNA (rrn) operons.</text>
</comment>
<comment type="similarity">
    <text evidence="1">Belongs to the NusB family.</text>
</comment>
<evidence type="ECO:0000255" key="1">
    <source>
        <dbReference type="HAMAP-Rule" id="MF_00073"/>
    </source>
</evidence>
<organism>
    <name type="scientific">Rickettsia rickettsii (strain Sheila Smith)</name>
    <dbReference type="NCBI Taxonomy" id="392021"/>
    <lineage>
        <taxon>Bacteria</taxon>
        <taxon>Pseudomonadati</taxon>
        <taxon>Pseudomonadota</taxon>
        <taxon>Alphaproteobacteria</taxon>
        <taxon>Rickettsiales</taxon>
        <taxon>Rickettsiaceae</taxon>
        <taxon>Rickettsieae</taxon>
        <taxon>Rickettsia</taxon>
        <taxon>spotted fever group</taxon>
    </lineage>
</organism>
<gene>
    <name evidence="1" type="primary">nusB</name>
    <name type="ordered locus">A1G_01160</name>
</gene>